<protein>
    <recommendedName>
        <fullName evidence="1">Chitooligosaccharide deacetylase</fullName>
        <shortName evidence="1">COD</shortName>
        <ecNumber evidence="1">3.5.1.105</ecNumber>
    </recommendedName>
    <alternativeName>
        <fullName evidence="1">Chitin disaccharide deacetylase</fullName>
    </alternativeName>
    <alternativeName>
        <fullName evidence="1">Chitobiose deacetylase</fullName>
    </alternativeName>
    <alternativeName>
        <fullName evidence="1">Chitobiose-6P deacetylase</fullName>
    </alternativeName>
    <alternativeName>
        <fullName evidence="1">Chitotriose deacetylase</fullName>
    </alternativeName>
    <alternativeName>
        <fullName evidence="1">Chitotriose-6P deacetylase</fullName>
    </alternativeName>
</protein>
<accession>B4T4L5</accession>
<comment type="function">
    <text evidence="1">Involved in the degradation of chitin. ChbG is essential for growth on the acetylated chitooligosaccharides chitobiose and chitotriose but is dispensable for growth on cellobiose and chitosan dimer, the deacetylated form of chitobiose. Deacetylation of chitobiose-6-P and chitotriose-6-P is necessary for both the activation of the chb promoter by the regulatory protein ChbR and the hydrolysis of phosphorylated beta-glucosides by the phospho-beta-glucosidase ChbF. Catalyzes the removal of only one acetyl group from chitobiose-6-P to yield monoacetylchitobiose-6-P, the inducer of ChbR and the substrate of ChbF.</text>
</comment>
<comment type="catalytic activity">
    <reaction evidence="1">
        <text>N,N'-diacetylchitobiose + H2O = N-acetyl-beta-D-glucosaminyl-(1-&gt;4)-D-glucosamine + acetate</text>
        <dbReference type="Rhea" id="RHEA:27469"/>
        <dbReference type="ChEBI" id="CHEBI:15377"/>
        <dbReference type="ChEBI" id="CHEBI:28681"/>
        <dbReference type="ChEBI" id="CHEBI:30089"/>
        <dbReference type="ChEBI" id="CHEBI:59910"/>
        <dbReference type="EC" id="3.5.1.105"/>
    </reaction>
</comment>
<comment type="catalytic activity">
    <reaction evidence="1">
        <text>diacetylchitobiose-6'-phosphate + H2O = N'-monoacetylchitobiose-6'-phosphate + acetate</text>
        <dbReference type="Rhea" id="RHEA:35083"/>
        <dbReference type="ChEBI" id="CHEBI:15377"/>
        <dbReference type="ChEBI" id="CHEBI:30089"/>
        <dbReference type="ChEBI" id="CHEBI:64883"/>
        <dbReference type="ChEBI" id="CHEBI:71315"/>
    </reaction>
</comment>
<comment type="cofactor">
    <cofactor evidence="1">
        <name>Mg(2+)</name>
        <dbReference type="ChEBI" id="CHEBI:18420"/>
    </cofactor>
</comment>
<comment type="pathway">
    <text evidence="1">Glycan degradation; chitin degradation.</text>
</comment>
<comment type="subunit">
    <text evidence="1">Homodimer.</text>
</comment>
<comment type="subcellular location">
    <subcellularLocation>
        <location evidence="1">Cytoplasm</location>
    </subcellularLocation>
</comment>
<comment type="similarity">
    <text evidence="1">Belongs to the YdjC deacetylase family. ChbG subfamily.</text>
</comment>
<evidence type="ECO:0000255" key="1">
    <source>
        <dbReference type="HAMAP-Rule" id="MF_01246"/>
    </source>
</evidence>
<name>CHBG_SALNS</name>
<gene>
    <name evidence="1" type="primary">chbG</name>
    <name type="ordered locus">SNSL254_A1431</name>
</gene>
<feature type="chain" id="PRO_1000139835" description="Chitooligosaccharide deacetylase">
    <location>
        <begin position="1"/>
        <end position="252"/>
    </location>
</feature>
<feature type="binding site" evidence="1">
    <location>
        <position position="61"/>
    </location>
    <ligand>
        <name>Mg(2+)</name>
        <dbReference type="ChEBI" id="CHEBI:18420"/>
    </ligand>
</feature>
<feature type="binding site" evidence="1">
    <location>
        <position position="125"/>
    </location>
    <ligand>
        <name>Mg(2+)</name>
        <dbReference type="ChEBI" id="CHEBI:18420"/>
    </ligand>
</feature>
<dbReference type="EC" id="3.5.1.105" evidence="1"/>
<dbReference type="EMBL" id="CP001113">
    <property type="protein sequence ID" value="ACF64009.1"/>
    <property type="molecule type" value="Genomic_DNA"/>
</dbReference>
<dbReference type="RefSeq" id="WP_000442731.1">
    <property type="nucleotide sequence ID" value="NZ_CCMR01000003.1"/>
</dbReference>
<dbReference type="SMR" id="B4T4L5"/>
<dbReference type="KEGG" id="see:SNSL254_A1431"/>
<dbReference type="HOGENOM" id="CLU_064244_4_1_6"/>
<dbReference type="UniPathway" id="UPA00349"/>
<dbReference type="Proteomes" id="UP000008824">
    <property type="component" value="Chromosome"/>
</dbReference>
<dbReference type="GO" id="GO:0005737">
    <property type="term" value="C:cytoplasm"/>
    <property type="evidence" value="ECO:0007669"/>
    <property type="project" value="UniProtKB-SubCell"/>
</dbReference>
<dbReference type="GO" id="GO:0036311">
    <property type="term" value="F:chitin disaccharide deacetylase activity"/>
    <property type="evidence" value="ECO:0007669"/>
    <property type="project" value="UniProtKB-UniRule"/>
</dbReference>
<dbReference type="GO" id="GO:0019213">
    <property type="term" value="F:deacetylase activity"/>
    <property type="evidence" value="ECO:0007669"/>
    <property type="project" value="TreeGrafter"/>
</dbReference>
<dbReference type="GO" id="GO:0046872">
    <property type="term" value="F:metal ion binding"/>
    <property type="evidence" value="ECO:0007669"/>
    <property type="project" value="UniProtKB-KW"/>
</dbReference>
<dbReference type="GO" id="GO:0006032">
    <property type="term" value="P:chitin catabolic process"/>
    <property type="evidence" value="ECO:0007669"/>
    <property type="project" value="UniProtKB-UniPathway"/>
</dbReference>
<dbReference type="GO" id="GO:0052777">
    <property type="term" value="P:diacetylchitobiose catabolic process"/>
    <property type="evidence" value="ECO:0007669"/>
    <property type="project" value="UniProtKB-UniRule"/>
</dbReference>
<dbReference type="GO" id="GO:0000272">
    <property type="term" value="P:polysaccharide catabolic process"/>
    <property type="evidence" value="ECO:0007669"/>
    <property type="project" value="UniProtKB-UniRule"/>
</dbReference>
<dbReference type="CDD" id="cd10803">
    <property type="entry name" value="YdjC_EF3048_like"/>
    <property type="match status" value="1"/>
</dbReference>
<dbReference type="FunFam" id="3.20.20.370:FF:000001">
    <property type="entry name" value="Chitooligosaccharide deacetylase"/>
    <property type="match status" value="1"/>
</dbReference>
<dbReference type="Gene3D" id="3.20.20.370">
    <property type="entry name" value="Glycoside hydrolase/deacetylase"/>
    <property type="match status" value="1"/>
</dbReference>
<dbReference type="HAMAP" id="MF_01246">
    <property type="entry name" value="COD"/>
    <property type="match status" value="1"/>
</dbReference>
<dbReference type="InterPro" id="IPR022948">
    <property type="entry name" value="COD_ChbG_bac"/>
</dbReference>
<dbReference type="InterPro" id="IPR011330">
    <property type="entry name" value="Glyco_hydro/deAcase_b/a-brl"/>
</dbReference>
<dbReference type="InterPro" id="IPR006879">
    <property type="entry name" value="YdjC-like"/>
</dbReference>
<dbReference type="NCBIfam" id="NF002559">
    <property type="entry name" value="PRK02134.1"/>
    <property type="match status" value="1"/>
</dbReference>
<dbReference type="PANTHER" id="PTHR31609:SF1">
    <property type="entry name" value="CARBOHYDRATE DEACETYLASE"/>
    <property type="match status" value="1"/>
</dbReference>
<dbReference type="PANTHER" id="PTHR31609">
    <property type="entry name" value="YDJC DEACETYLASE FAMILY MEMBER"/>
    <property type="match status" value="1"/>
</dbReference>
<dbReference type="Pfam" id="PF04794">
    <property type="entry name" value="YdjC"/>
    <property type="match status" value="1"/>
</dbReference>
<dbReference type="SUPFAM" id="SSF88713">
    <property type="entry name" value="Glycoside hydrolase/deacetylase"/>
    <property type="match status" value="1"/>
</dbReference>
<proteinExistence type="inferred from homology"/>
<reference key="1">
    <citation type="journal article" date="2011" name="J. Bacteriol.">
        <title>Comparative genomics of 28 Salmonella enterica isolates: evidence for CRISPR-mediated adaptive sublineage evolution.</title>
        <authorList>
            <person name="Fricke W.F."/>
            <person name="Mammel M.K."/>
            <person name="McDermott P.F."/>
            <person name="Tartera C."/>
            <person name="White D.G."/>
            <person name="Leclerc J.E."/>
            <person name="Ravel J."/>
            <person name="Cebula T.A."/>
        </authorList>
    </citation>
    <scope>NUCLEOTIDE SEQUENCE [LARGE SCALE GENOMIC DNA]</scope>
    <source>
        <strain>SL254</strain>
    </source>
</reference>
<sequence>MERVLIVNADDFGLSKGQNYGIVEAYRNGVVTSTTALVNGEAIDHAAQLSRELPALGVGMHFVLTLGKPVSEMPGLTRDGLLGKWIWQMAEEDTLPLDEIAHELACQYQRFIDVFGREPTHLDSHHHVHMFPQIFPIVARFAAQRGIALRIDRQTVLNADDLPSDLRSTQGFSSEFYGEEITEACFLRILDASAHRGEASLEVMCHPAFVDNIIRQSAYCYPRLTELEVLTSASLKAGIAERGYRPGSFLDI</sequence>
<organism>
    <name type="scientific">Salmonella newport (strain SL254)</name>
    <dbReference type="NCBI Taxonomy" id="423368"/>
    <lineage>
        <taxon>Bacteria</taxon>
        <taxon>Pseudomonadati</taxon>
        <taxon>Pseudomonadota</taxon>
        <taxon>Gammaproteobacteria</taxon>
        <taxon>Enterobacterales</taxon>
        <taxon>Enterobacteriaceae</taxon>
        <taxon>Salmonella</taxon>
    </lineage>
</organism>
<keyword id="KW-0119">Carbohydrate metabolism</keyword>
<keyword id="KW-0146">Chitin degradation</keyword>
<keyword id="KW-0963">Cytoplasm</keyword>
<keyword id="KW-0378">Hydrolase</keyword>
<keyword id="KW-0460">Magnesium</keyword>
<keyword id="KW-0479">Metal-binding</keyword>
<keyword id="KW-0624">Polysaccharide degradation</keyword>